<comment type="function">
    <text evidence="4 5">May play a role in regulating the structure of the neuronal region, called the active zone, from which synaptic vesicles send neurotransmitter signals across the synapse (PubMed:10517634, PubMed:19290026). This may be in association with the liprin-beta protein hlb-1 (PubMed:19290026).</text>
</comment>
<comment type="interaction">
    <interactant intactId="EBI-327903">
        <id>Q21049</id>
    </interactant>
    <interactant intactId="EBI-15812209">
        <id>P23678-1</id>
        <label>unc-104</label>
    </interactant>
    <organismsDiffer>false</organismsDiffer>
    <experiments>9</experiments>
</comment>
<comment type="subcellular location">
    <subcellularLocation>
        <location evidence="4">Synapse</location>
    </subcellularLocation>
    <text>Presynaptic region.</text>
</comment>
<comment type="tissue specificity">
    <text evidence="6">Detected in vulval muscle and other cells near the vulva; in neurons located in the lateral ganglion, posterior ganglion, ventral cord and lateral body; and in pharyngeal and body wall muscle cells.</text>
</comment>
<comment type="similarity">
    <text evidence="7">Belongs to the liprin family. Liprin-alpha subfamily.</text>
</comment>
<proteinExistence type="evidence at protein level"/>
<organism>
    <name type="scientific">Caenorhabditis elegans</name>
    <dbReference type="NCBI Taxonomy" id="6239"/>
    <lineage>
        <taxon>Eukaryota</taxon>
        <taxon>Metazoa</taxon>
        <taxon>Ecdysozoa</taxon>
        <taxon>Nematoda</taxon>
        <taxon>Chromadorea</taxon>
        <taxon>Rhabditida</taxon>
        <taxon>Rhabditina</taxon>
        <taxon>Rhabditomorpha</taxon>
        <taxon>Rhabditoidea</taxon>
        <taxon>Rhabditidae</taxon>
        <taxon>Peloderinae</taxon>
        <taxon>Caenorhabditis</taxon>
    </lineage>
</organism>
<dbReference type="EMBL" id="BX284606">
    <property type="protein sequence ID" value="CAA90660.1"/>
    <property type="molecule type" value="Genomic_DNA"/>
</dbReference>
<dbReference type="EMBL" id="AF170122">
    <property type="protein sequence ID" value="AAD47840.1"/>
    <property type="molecule type" value="mRNA"/>
</dbReference>
<dbReference type="PIR" id="T23018">
    <property type="entry name" value="T23018"/>
</dbReference>
<dbReference type="RefSeq" id="NP_509768.1">
    <property type="nucleotide sequence ID" value="NM_077367.10"/>
</dbReference>
<dbReference type="SMR" id="Q21049"/>
<dbReference type="BioGRID" id="46167">
    <property type="interactions" value="10"/>
</dbReference>
<dbReference type="DIP" id="DIP-26340N"/>
<dbReference type="FunCoup" id="Q21049">
    <property type="interactions" value="2106"/>
</dbReference>
<dbReference type="IntAct" id="Q21049">
    <property type="interactions" value="2"/>
</dbReference>
<dbReference type="STRING" id="6239.F59F5.6.1"/>
<dbReference type="iPTMnet" id="Q21049"/>
<dbReference type="PaxDb" id="6239-F59F5.6"/>
<dbReference type="PeptideAtlas" id="Q21049"/>
<dbReference type="EnsemblMetazoa" id="F59F5.6.1">
    <property type="protein sequence ID" value="F59F5.6.1"/>
    <property type="gene ID" value="WBGene00006364"/>
</dbReference>
<dbReference type="EnsemblMetazoa" id="F59F5.6.2">
    <property type="protein sequence ID" value="F59F5.6.2"/>
    <property type="gene ID" value="WBGene00006364"/>
</dbReference>
<dbReference type="GeneID" id="181255"/>
<dbReference type="KEGG" id="cel:CELE_F59F5.6"/>
<dbReference type="UCSC" id="F59F5.6">
    <property type="organism name" value="c. elegans"/>
</dbReference>
<dbReference type="AGR" id="WB:WBGene00006364"/>
<dbReference type="CTD" id="181255"/>
<dbReference type="WormBase" id="F59F5.6">
    <property type="protein sequence ID" value="CE03447"/>
    <property type="gene ID" value="WBGene00006364"/>
    <property type="gene designation" value="syd-2"/>
</dbReference>
<dbReference type="eggNOG" id="KOG0249">
    <property type="taxonomic scope" value="Eukaryota"/>
</dbReference>
<dbReference type="GeneTree" id="ENSGT01050000244900"/>
<dbReference type="HOGENOM" id="CLU_006923_0_0_1"/>
<dbReference type="InParanoid" id="Q21049"/>
<dbReference type="OMA" id="CIGLREY"/>
<dbReference type="OrthoDB" id="2132119at2759"/>
<dbReference type="PhylomeDB" id="Q21049"/>
<dbReference type="Reactome" id="R-CEL-181429">
    <property type="pathway name" value="Serotonin Neurotransmitter Release Cycle"/>
</dbReference>
<dbReference type="Reactome" id="R-CEL-181430">
    <property type="pathway name" value="Norepinephrine Neurotransmitter Release Cycle"/>
</dbReference>
<dbReference type="Reactome" id="R-CEL-210500">
    <property type="pathway name" value="Glutamate Neurotransmitter Release Cycle"/>
</dbReference>
<dbReference type="Reactome" id="R-CEL-212676">
    <property type="pathway name" value="Dopamine Neurotransmitter Release Cycle"/>
</dbReference>
<dbReference type="Reactome" id="R-CEL-264642">
    <property type="pathway name" value="Acetylcholine Neurotransmitter Release Cycle"/>
</dbReference>
<dbReference type="Reactome" id="R-CEL-388844">
    <property type="pathway name" value="Receptor-type tyrosine-protein phosphatases"/>
</dbReference>
<dbReference type="CD-CODE" id="3E94B511">
    <property type="entry name" value="Presynaptic clusters"/>
</dbReference>
<dbReference type="PRO" id="PR:Q21049"/>
<dbReference type="Proteomes" id="UP000001940">
    <property type="component" value="Chromosome X"/>
</dbReference>
<dbReference type="Bgee" id="WBGene00006364">
    <property type="expression patterns" value="Expressed in pharyngeal muscle cell (C elegans) and 3 other cell types or tissues"/>
</dbReference>
<dbReference type="GO" id="GO:0030424">
    <property type="term" value="C:axon"/>
    <property type="evidence" value="ECO:0000314"/>
    <property type="project" value="WormBase"/>
</dbReference>
<dbReference type="GO" id="GO:1904115">
    <property type="term" value="C:axon cytoplasm"/>
    <property type="evidence" value="ECO:0007669"/>
    <property type="project" value="GOC"/>
</dbReference>
<dbReference type="GO" id="GO:0005737">
    <property type="term" value="C:cytoplasm"/>
    <property type="evidence" value="ECO:0000314"/>
    <property type="project" value="WormBase"/>
</dbReference>
<dbReference type="GO" id="GO:0043005">
    <property type="term" value="C:neuron projection"/>
    <property type="evidence" value="ECO:0000314"/>
    <property type="project" value="UniProtKB"/>
</dbReference>
<dbReference type="GO" id="GO:0005886">
    <property type="term" value="C:plasma membrane"/>
    <property type="evidence" value="ECO:0007669"/>
    <property type="project" value="GOC"/>
</dbReference>
<dbReference type="GO" id="GO:0048786">
    <property type="term" value="C:presynaptic active zone"/>
    <property type="evidence" value="ECO:0000314"/>
    <property type="project" value="WormBase"/>
</dbReference>
<dbReference type="GO" id="GO:0097445">
    <property type="term" value="C:presynaptic active zone dense projection"/>
    <property type="evidence" value="ECO:0000314"/>
    <property type="project" value="WormBase"/>
</dbReference>
<dbReference type="GO" id="GO:0045202">
    <property type="term" value="C:synapse"/>
    <property type="evidence" value="ECO:0000314"/>
    <property type="project" value="WormBase"/>
</dbReference>
<dbReference type="GO" id="GO:0140660">
    <property type="term" value="F:cytoskeletal motor activator activity"/>
    <property type="evidence" value="ECO:0000315"/>
    <property type="project" value="WormBase"/>
</dbReference>
<dbReference type="GO" id="GO:0019894">
    <property type="term" value="F:kinesin binding"/>
    <property type="evidence" value="ECO:0000353"/>
    <property type="project" value="WormBase"/>
</dbReference>
<dbReference type="GO" id="GO:0042803">
    <property type="term" value="F:protein homodimerization activity"/>
    <property type="evidence" value="ECO:0000353"/>
    <property type="project" value="WormBase"/>
</dbReference>
<dbReference type="GO" id="GO:0030159">
    <property type="term" value="F:signaling receptor complex adaptor activity"/>
    <property type="evidence" value="ECO:0000315"/>
    <property type="project" value="WormBase"/>
</dbReference>
<dbReference type="GO" id="GO:0048490">
    <property type="term" value="P:anterograde synaptic vesicle transport"/>
    <property type="evidence" value="ECO:0000315"/>
    <property type="project" value="WormBase"/>
</dbReference>
<dbReference type="GO" id="GO:0008088">
    <property type="term" value="P:axo-dendritic transport"/>
    <property type="evidence" value="ECO:0000316"/>
    <property type="project" value="WormBase"/>
</dbReference>
<dbReference type="GO" id="GO:0018991">
    <property type="term" value="P:egg-laying behavior"/>
    <property type="evidence" value="ECO:0000315"/>
    <property type="project" value="WormBase"/>
</dbReference>
<dbReference type="GO" id="GO:0040011">
    <property type="term" value="P:locomotion"/>
    <property type="evidence" value="ECO:0000316"/>
    <property type="project" value="WormBase"/>
</dbReference>
<dbReference type="GO" id="GO:0007626">
    <property type="term" value="P:locomotory behavior"/>
    <property type="evidence" value="ECO:0000315"/>
    <property type="project" value="WormBase"/>
</dbReference>
<dbReference type="GO" id="GO:0007274">
    <property type="term" value="P:neuromuscular synaptic transmission"/>
    <property type="evidence" value="ECO:0000314"/>
    <property type="project" value="WormBase"/>
</dbReference>
<dbReference type="GO" id="GO:1903744">
    <property type="term" value="P:positive regulation of anterograde synaptic vesicle transport"/>
    <property type="evidence" value="ECO:0000315"/>
    <property type="project" value="WormBase"/>
</dbReference>
<dbReference type="GO" id="GO:1905608">
    <property type="term" value="P:positive regulation of presynapse assembly"/>
    <property type="evidence" value="ECO:0000315"/>
    <property type="project" value="UniProtKB"/>
</dbReference>
<dbReference type="GO" id="GO:0008104">
    <property type="term" value="P:protein localization"/>
    <property type="evidence" value="ECO:0000315"/>
    <property type="project" value="WormBase"/>
</dbReference>
<dbReference type="GO" id="GO:0043113">
    <property type="term" value="P:receptor clustering"/>
    <property type="evidence" value="ECO:0000250"/>
    <property type="project" value="WormBase"/>
</dbReference>
<dbReference type="GO" id="GO:0050807">
    <property type="term" value="P:regulation of synapse organization"/>
    <property type="evidence" value="ECO:0000316"/>
    <property type="project" value="UniProtKB"/>
</dbReference>
<dbReference type="GO" id="GO:0050803">
    <property type="term" value="P:regulation of synapse structure or activity"/>
    <property type="evidence" value="ECO:0000315"/>
    <property type="project" value="WormBase"/>
</dbReference>
<dbReference type="GO" id="GO:0050808">
    <property type="term" value="P:synapse organization"/>
    <property type="evidence" value="ECO:0000315"/>
    <property type="project" value="WormBase"/>
</dbReference>
<dbReference type="GO" id="GO:0048489">
    <property type="term" value="P:synaptic vesicle transport"/>
    <property type="evidence" value="ECO:0000315"/>
    <property type="project" value="UniProtKB"/>
</dbReference>
<dbReference type="CDD" id="cd09562">
    <property type="entry name" value="SAM_liprin-alpha1_2_3_4_repeat1"/>
    <property type="match status" value="1"/>
</dbReference>
<dbReference type="CDD" id="cd09565">
    <property type="entry name" value="SAM_liprin-alpha1_2_3_4_repeat2"/>
    <property type="match status" value="1"/>
</dbReference>
<dbReference type="CDD" id="cd09568">
    <property type="entry name" value="SAM_liprin-alpha1_2_3_4_repeat3"/>
    <property type="match status" value="1"/>
</dbReference>
<dbReference type="Gene3D" id="1.10.150.50">
    <property type="entry name" value="Transcription Factor, Ets-1"/>
    <property type="match status" value="3"/>
</dbReference>
<dbReference type="InterPro" id="IPR029515">
    <property type="entry name" value="Liprin"/>
</dbReference>
<dbReference type="InterPro" id="IPR037620">
    <property type="entry name" value="Liprin-alpha_SAM_rpt_1"/>
</dbReference>
<dbReference type="InterPro" id="IPR037621">
    <property type="entry name" value="Liprin-alpha_SAM_rpt_2"/>
</dbReference>
<dbReference type="InterPro" id="IPR037622">
    <property type="entry name" value="Liprin-alpha_SAM_rpt_3"/>
</dbReference>
<dbReference type="InterPro" id="IPR001660">
    <property type="entry name" value="SAM"/>
</dbReference>
<dbReference type="InterPro" id="IPR013761">
    <property type="entry name" value="SAM/pointed_sf"/>
</dbReference>
<dbReference type="PANTHER" id="PTHR12587">
    <property type="entry name" value="LAR INTERACTING PROTEIN LIP -RELATED PROTEIN"/>
    <property type="match status" value="1"/>
</dbReference>
<dbReference type="PANTHER" id="PTHR12587:SF20">
    <property type="entry name" value="LIPRIN-ALPHA, ISOFORM E"/>
    <property type="match status" value="1"/>
</dbReference>
<dbReference type="Pfam" id="PF00536">
    <property type="entry name" value="SAM_1"/>
    <property type="match status" value="2"/>
</dbReference>
<dbReference type="Pfam" id="PF07647">
    <property type="entry name" value="SAM_2"/>
    <property type="match status" value="1"/>
</dbReference>
<dbReference type="SMART" id="SM00454">
    <property type="entry name" value="SAM"/>
    <property type="match status" value="3"/>
</dbReference>
<dbReference type="SUPFAM" id="SSF47769">
    <property type="entry name" value="SAM/Pointed domain"/>
    <property type="match status" value="2"/>
</dbReference>
<dbReference type="SUPFAM" id="SSF57997">
    <property type="entry name" value="Tropomyosin"/>
    <property type="match status" value="1"/>
</dbReference>
<dbReference type="PROSITE" id="PS50105">
    <property type="entry name" value="SAM_DOMAIN"/>
    <property type="match status" value="3"/>
</dbReference>
<protein>
    <recommendedName>
        <fullName>Liprin-alpha</fullName>
    </recommendedName>
    <alternativeName>
        <fullName>LAR-interacting protein alpha</fullName>
    </alternativeName>
    <alternativeName>
        <fullName>Synapse defective protein 2</fullName>
    </alternativeName>
</protein>
<keyword id="KW-0175">Coiled coil</keyword>
<keyword id="KW-1185">Reference proteome</keyword>
<keyword id="KW-0677">Repeat</keyword>
<keyword id="KW-0770">Synapse</keyword>
<feature type="chain" id="PRO_0000191038" description="Liprin-alpha">
    <location>
        <begin position="1"/>
        <end position="1139"/>
    </location>
</feature>
<feature type="domain" description="SAM 1" evidence="2">
    <location>
        <begin position="867"/>
        <end position="933"/>
    </location>
</feature>
<feature type="domain" description="SAM 2" evidence="2">
    <location>
        <begin position="952"/>
        <end position="1016"/>
    </location>
</feature>
<feature type="domain" description="SAM 3" evidence="2">
    <location>
        <begin position="1040"/>
        <end position="1109"/>
    </location>
</feature>
<feature type="region of interest" description="Disordered" evidence="3">
    <location>
        <begin position="700"/>
        <end position="720"/>
    </location>
</feature>
<feature type="region of interest" description="Disordered" evidence="3">
    <location>
        <begin position="764"/>
        <end position="847"/>
    </location>
</feature>
<feature type="coiled-coil region" evidence="1">
    <location>
        <begin position="30"/>
        <end position="144"/>
    </location>
</feature>
<feature type="coiled-coil region" evidence="1">
    <location>
        <begin position="172"/>
        <end position="298"/>
    </location>
</feature>
<feature type="coiled-coil region" evidence="1">
    <location>
        <begin position="329"/>
        <end position="517"/>
    </location>
</feature>
<feature type="coiled-coil region" evidence="1">
    <location>
        <begin position="655"/>
        <end position="701"/>
    </location>
</feature>
<feature type="compositionally biased region" description="Polar residues" evidence="3">
    <location>
        <begin position="704"/>
        <end position="719"/>
    </location>
</feature>
<feature type="compositionally biased region" description="Polar residues" evidence="3">
    <location>
        <begin position="778"/>
        <end position="787"/>
    </location>
</feature>
<evidence type="ECO:0000255" key="1"/>
<evidence type="ECO:0000255" key="2">
    <source>
        <dbReference type="PROSITE-ProRule" id="PRU00184"/>
    </source>
</evidence>
<evidence type="ECO:0000256" key="3">
    <source>
        <dbReference type="SAM" id="MobiDB-lite"/>
    </source>
</evidence>
<evidence type="ECO:0000269" key="4">
    <source>
    </source>
</evidence>
<evidence type="ECO:0000269" key="5">
    <source>
    </source>
</evidence>
<evidence type="ECO:0000269" key="6">
    <source>
    </source>
</evidence>
<evidence type="ECO:0000305" key="7"/>
<evidence type="ECO:0000312" key="8">
    <source>
        <dbReference type="WormBase" id="F59F5.6"/>
    </source>
</evidence>
<gene>
    <name evidence="8" type="primary">syd-2</name>
    <name evidence="8" type="ORF">F59F5.6</name>
</gene>
<accession>Q21049</accession>
<reference key="1">
    <citation type="journal article" date="1999" name="Nature">
        <title>The liprin protein SYD-2 regulates the differentiation of presynaptic termini in C. elegans.</title>
        <authorList>
            <person name="Zhen M."/>
            <person name="Jin Y."/>
        </authorList>
    </citation>
    <scope>NUCLEOTIDE SEQUENCE [MRNA]</scope>
    <scope>SUBCELLULAR LOCATION</scope>
    <scope>FUNCTION</scope>
</reference>
<reference key="2">
    <citation type="journal article" date="1998" name="Science">
        <title>Genome sequence of the nematode C. elegans: a platform for investigating biology.</title>
        <authorList>
            <consortium name="The C. elegans sequencing consortium"/>
        </authorList>
    </citation>
    <scope>NUCLEOTIDE SEQUENCE [LARGE SCALE GENOMIC DNA]</scope>
    <source>
        <strain>Bristol N2</strain>
    </source>
</reference>
<reference key="3">
    <citation type="journal article" date="1998" name="J. Biol. Chem.">
        <title>Liprins, a family of LAR transmembrane protein-tyrosine phosphatase-interacting proteins.</title>
        <authorList>
            <person name="Serra-Pages C."/>
            <person name="Medley Q.G."/>
            <person name="Tang M."/>
            <person name="Hart A."/>
            <person name="Streuli M."/>
        </authorList>
    </citation>
    <scope>TISSUE SPECIFICITY</scope>
</reference>
<reference key="4">
    <citation type="journal article" date="2009" name="Neurosci. Bull.">
        <title>HLB-1 functions as a new regulator for the organization and function of neuromuscular junctions in nematode Caenorhabditis elegans.</title>
        <authorList>
            <person name="Wang D.Y."/>
            <person name="Wang Y."/>
        </authorList>
    </citation>
    <scope>FUNCTION</scope>
</reference>
<sequence length="1139" mass="130334">MSYSNGNINCDIMPTISEDGVDNGGPIDEPSDRDNIEQLMMNMLEDRDKLQEQLENYKVQLENAGLRTKEVEKERDMMKRQFEVHTQNLPQELQTMTRELCLLKEQLLEKDEEIVELKAERNNTRLLLEHLECLVSRHERSLRMTVMKRQAQNHAGVSSEVEVLKALKSLFEHHKALDEKVRERLRVAMERVATLEEELSTKGDENSSLKARIATYAAEAEEAMASNAPINGSISSESANRLIEMQEALERMKTELANSLKQSTEITTRNAELEDQLTEDAREKHAAQESIVRLKNQICELDAQRTDQETRITTFESRFLTAQRESTCIRDLNDKLEHQLANKDAAVRLNEEKVHSLQERLELAEKQLAQSLKKAESLPSVEAELQQRMEALTAAEQKSVSAEERIQRLDRNIQELSAELERAVQRERMNEEHSQRLSSTVDKLLSESNDRLQLHLKERMQALDDKNRLTQQLDGTKKIYDQAERIKDRLQRDNESLRQEIEALRQQLYNARTAQFQSRMHAIPFTHAQNIVQQQPQASIAQQSAYQMYKQQPAQQYQTVGMRRPNKGRISALQDDPNKVQTLNEQEWDRLQQAHVLANVQQAFSSSPSLADVGQSTLPRPNTAVQHQQDDMMNSGMGMPSGMQGGMQGGMGGGQDAQMLASMLQDRLDAINTEIRLIQQEKHHAERVAEQLERSSREFYDDQGISTRSSPRASPQLDNMRQHKYNTLPANVSGDRRYDIYGNPQFVDDRMVRDLDYEPRRGYNQFDEMQYERDRMSPASSVASSTDGVLGGKKKRSNSSSGLKTLGRFFNKKKNSSSDLFKRNGDYSDGEQSGTEGNQKADYDRRKKKKHELLEEAMKARTPFALWNGPTVVAWLELWVGMPAWYVAACRANVKSGAIMSALSDQEIQKEIGISNPLHRLKLRLAIQEMVSLTSPSAPRTARLTLAFGDMNHEYIGNDWLPCLGLAQYRSAFMECLLDARMLEHLSKRDLRTHLRMVDTFHRTSLQYGIMCLKKVNYDKKVLADRRKACDNINTDLLVWSNERVQRWVEEIGLGVFSRNLVDSGIHGALIALDETFDASAFAYALQIGSQDVPNRQLLEKKFIGLVNDHRQQSDPHPRSGSSRKNDSIAKSYEFHLYT</sequence>
<name>LIPA_CAEEL</name>